<sequence length="386" mass="42433">MGCQFSVNSKKVRIFDTTLRDGEQAPGIDLTVEQKVKIARKLAELGVDVIEAGFPAASEGEFIATKKILEEVGDQVEVIGLSRANKQDIDKTIDTGISSIHVFIATSDIHLKYKLKMTREQVLDKIYESVRYAKDHGLIVEYSPEDATRTDKDFLLKAVSTAIEAGADRINIPDTVGVMHPFKFHDLIKDVVSVTKDKIVSVHCHNDFGLATANSIAGVMAGARQVHVTVNGIGERAGNASLEEVVMALKKLLGYEVNIKTYKLYETSRLVSELTGVPVPYFKAIVGENAFGHEAGIHVHGVIENPLTYEPISPEEVGNFRRLALGKHSGIHGLKKLLEEQGIYLNDQELREVLNEIKKLAENGEKVNVDVAKEIAIKVSSKKIKV</sequence>
<keyword id="KW-0028">Amino-acid biosynthesis</keyword>
<keyword id="KW-0100">Branched-chain amino acid biosynthesis</keyword>
<keyword id="KW-0432">Leucine biosynthesis</keyword>
<keyword id="KW-0479">Metal-binding</keyword>
<keyword id="KW-1185">Reference proteome</keyword>
<keyword id="KW-0808">Transferase</keyword>
<evidence type="ECO:0000250" key="1">
    <source>
        <dbReference type="UniProtKB" id="P9WQB3"/>
    </source>
</evidence>
<evidence type="ECO:0000250" key="2">
    <source>
        <dbReference type="UniProtKB" id="Q4JA78"/>
    </source>
</evidence>
<evidence type="ECO:0000250" key="3">
    <source>
        <dbReference type="UniProtKB" id="Q9JZG1"/>
    </source>
</evidence>
<evidence type="ECO:0000255" key="4">
    <source>
        <dbReference type="PROSITE-ProRule" id="PRU01151"/>
    </source>
</evidence>
<evidence type="ECO:0000305" key="5"/>
<accession>Q974X3</accession>
<feature type="chain" id="PRO_0000140425" description="2-isopropylmalate synthase">
    <location>
        <begin position="1"/>
        <end position="386"/>
    </location>
</feature>
<feature type="domain" description="Pyruvate carboxyltransferase" evidence="4">
    <location>
        <begin position="12"/>
        <end position="265"/>
    </location>
</feature>
<feature type="binding site" evidence="3">
    <location>
        <position position="21"/>
    </location>
    <ligand>
        <name>a divalent metal cation</name>
        <dbReference type="ChEBI" id="CHEBI:60240"/>
    </ligand>
</feature>
<feature type="binding site" evidence="3">
    <location>
        <position position="203"/>
    </location>
    <ligand>
        <name>a divalent metal cation</name>
        <dbReference type="ChEBI" id="CHEBI:60240"/>
    </ligand>
</feature>
<feature type="binding site" evidence="3">
    <location>
        <position position="205"/>
    </location>
    <ligand>
        <name>a divalent metal cation</name>
        <dbReference type="ChEBI" id="CHEBI:60240"/>
    </ligand>
</feature>
<feature type="binding site" evidence="3">
    <location>
        <position position="239"/>
    </location>
    <ligand>
        <name>a divalent metal cation</name>
        <dbReference type="ChEBI" id="CHEBI:60240"/>
    </ligand>
</feature>
<organism>
    <name type="scientific">Sulfurisphaera tokodaii (strain DSM 16993 / JCM 10545 / NBRC 100140 / 7)</name>
    <name type="common">Sulfolobus tokodaii</name>
    <dbReference type="NCBI Taxonomy" id="273063"/>
    <lineage>
        <taxon>Archaea</taxon>
        <taxon>Thermoproteota</taxon>
        <taxon>Thermoprotei</taxon>
        <taxon>Sulfolobales</taxon>
        <taxon>Sulfolobaceae</taxon>
        <taxon>Sulfurisphaera</taxon>
    </lineage>
</organism>
<proteinExistence type="inferred from homology"/>
<comment type="function">
    <text evidence="2">Catalyzes the condensation of the acetyl group of acetyl-CoA with 3-methyl-2-oxobutanoate (2-oxoisovalerate) to form 3-carboxy-3-hydroxy-4-methylpentanoate (2-isopropylmalate). Carries out the first step of the leucine biosynthesis pathway.</text>
</comment>
<comment type="catalytic activity">
    <reaction evidence="2">
        <text>3-methyl-2-oxobutanoate + acetyl-CoA + H2O = (2S)-2-isopropylmalate + CoA + H(+)</text>
        <dbReference type="Rhea" id="RHEA:21524"/>
        <dbReference type="ChEBI" id="CHEBI:1178"/>
        <dbReference type="ChEBI" id="CHEBI:11851"/>
        <dbReference type="ChEBI" id="CHEBI:15377"/>
        <dbReference type="ChEBI" id="CHEBI:15378"/>
        <dbReference type="ChEBI" id="CHEBI:57287"/>
        <dbReference type="ChEBI" id="CHEBI:57288"/>
        <dbReference type="EC" id="2.3.3.13"/>
    </reaction>
    <physiologicalReaction direction="left-to-right" evidence="2">
        <dbReference type="Rhea" id="RHEA:21525"/>
    </physiologicalReaction>
</comment>
<comment type="cofactor">
    <cofactor evidence="1 3">
        <name>a divalent metal cation</name>
        <dbReference type="ChEBI" id="CHEBI:60240"/>
    </cofactor>
</comment>
<comment type="pathway">
    <text evidence="2">Amino-acid biosynthesis; L-leucine biosynthesis; L-leucine from 3-methyl-2-oxobutanoate: step 1/4.</text>
</comment>
<comment type="subunit">
    <text evidence="1">Homodimer.</text>
</comment>
<comment type="similarity">
    <text evidence="5">Belongs to the alpha-IPM synthase/homocitrate synthase family.</text>
</comment>
<name>LEU1_SULTO</name>
<reference key="1">
    <citation type="journal article" date="2001" name="DNA Res.">
        <title>Complete genome sequence of an aerobic thermoacidophilic Crenarchaeon, Sulfolobus tokodaii strain7.</title>
        <authorList>
            <person name="Kawarabayasi Y."/>
            <person name="Hino Y."/>
            <person name="Horikawa H."/>
            <person name="Jin-no K."/>
            <person name="Takahashi M."/>
            <person name="Sekine M."/>
            <person name="Baba S."/>
            <person name="Ankai A."/>
            <person name="Kosugi H."/>
            <person name="Hosoyama A."/>
            <person name="Fukui S."/>
            <person name="Nagai Y."/>
            <person name="Nishijima K."/>
            <person name="Otsuka R."/>
            <person name="Nakazawa H."/>
            <person name="Takamiya M."/>
            <person name="Kato Y."/>
            <person name="Yoshizawa T."/>
            <person name="Tanaka T."/>
            <person name="Kudoh Y."/>
            <person name="Yamazaki J."/>
            <person name="Kushida N."/>
            <person name="Oguchi A."/>
            <person name="Aoki K."/>
            <person name="Masuda S."/>
            <person name="Yanagii M."/>
            <person name="Nishimura M."/>
            <person name="Yamagishi A."/>
            <person name="Oshima T."/>
            <person name="Kikuchi H."/>
        </authorList>
    </citation>
    <scope>NUCLEOTIDE SEQUENCE [LARGE SCALE GENOMIC DNA]</scope>
    <source>
        <strain>DSM 16993 / JCM 10545 / NBRC 100140 / 7</strain>
    </source>
</reference>
<dbReference type="EC" id="2.3.3.13" evidence="2"/>
<dbReference type="EMBL" id="BA000023">
    <property type="protein sequence ID" value="BAB65534.1"/>
    <property type="molecule type" value="Genomic_DNA"/>
</dbReference>
<dbReference type="RefSeq" id="WP_010978517.1">
    <property type="nucleotide sequence ID" value="NC_003106.2"/>
</dbReference>
<dbReference type="SMR" id="Q974X3"/>
<dbReference type="STRING" id="273063.STK_05380"/>
<dbReference type="GeneID" id="1458484"/>
<dbReference type="KEGG" id="sto:STK_05380"/>
<dbReference type="PATRIC" id="fig|273063.9.peg.618"/>
<dbReference type="eggNOG" id="arCOG02092">
    <property type="taxonomic scope" value="Archaea"/>
</dbReference>
<dbReference type="OrthoDB" id="6555at2157"/>
<dbReference type="UniPathway" id="UPA00048">
    <property type="reaction ID" value="UER00070"/>
</dbReference>
<dbReference type="Proteomes" id="UP000001015">
    <property type="component" value="Chromosome"/>
</dbReference>
<dbReference type="GO" id="GO:0003852">
    <property type="term" value="F:2-isopropylmalate synthase activity"/>
    <property type="evidence" value="ECO:0007669"/>
    <property type="project" value="UniProtKB-EC"/>
</dbReference>
<dbReference type="GO" id="GO:0046872">
    <property type="term" value="F:metal ion binding"/>
    <property type="evidence" value="ECO:0007669"/>
    <property type="project" value="UniProtKB-KW"/>
</dbReference>
<dbReference type="GO" id="GO:0009098">
    <property type="term" value="P:L-leucine biosynthetic process"/>
    <property type="evidence" value="ECO:0007669"/>
    <property type="project" value="UniProtKB-UniPathway"/>
</dbReference>
<dbReference type="CDD" id="cd07940">
    <property type="entry name" value="DRE_TIM_IPMS"/>
    <property type="match status" value="1"/>
</dbReference>
<dbReference type="FunFam" id="1.10.238.260:FF:000001">
    <property type="entry name" value="2-isopropylmalate synthase"/>
    <property type="match status" value="1"/>
</dbReference>
<dbReference type="FunFam" id="3.20.20.70:FF:000010">
    <property type="entry name" value="2-isopropylmalate synthase"/>
    <property type="match status" value="1"/>
</dbReference>
<dbReference type="Gene3D" id="1.10.238.260">
    <property type="match status" value="1"/>
</dbReference>
<dbReference type="Gene3D" id="3.20.20.70">
    <property type="entry name" value="Aldolase class I"/>
    <property type="match status" value="1"/>
</dbReference>
<dbReference type="InterPro" id="IPR050073">
    <property type="entry name" value="2-IPM_HCS-like"/>
</dbReference>
<dbReference type="InterPro" id="IPR002034">
    <property type="entry name" value="AIPM/Hcit_synth_CS"/>
</dbReference>
<dbReference type="InterPro" id="IPR013785">
    <property type="entry name" value="Aldolase_TIM"/>
</dbReference>
<dbReference type="InterPro" id="IPR054948">
    <property type="entry name" value="IPMS"/>
</dbReference>
<dbReference type="InterPro" id="IPR011830">
    <property type="entry name" value="LEU1_arch"/>
</dbReference>
<dbReference type="InterPro" id="IPR054691">
    <property type="entry name" value="LeuA/HCS_post-cat"/>
</dbReference>
<dbReference type="InterPro" id="IPR000891">
    <property type="entry name" value="PYR_CT"/>
</dbReference>
<dbReference type="NCBIfam" id="NF041069">
    <property type="entry name" value="IPMS_Sufob"/>
    <property type="match status" value="1"/>
</dbReference>
<dbReference type="NCBIfam" id="TIGR02090">
    <property type="entry name" value="LEU1_arch"/>
    <property type="match status" value="1"/>
</dbReference>
<dbReference type="NCBIfam" id="NF002085">
    <property type="entry name" value="PRK00915.1-2"/>
    <property type="match status" value="1"/>
</dbReference>
<dbReference type="PANTHER" id="PTHR10277:SF9">
    <property type="entry name" value="2-ISOPROPYLMALATE SYNTHASE 1, CHLOROPLASTIC-RELATED"/>
    <property type="match status" value="1"/>
</dbReference>
<dbReference type="PANTHER" id="PTHR10277">
    <property type="entry name" value="HOMOCITRATE SYNTHASE-RELATED"/>
    <property type="match status" value="1"/>
</dbReference>
<dbReference type="Pfam" id="PF22617">
    <property type="entry name" value="HCS_D2"/>
    <property type="match status" value="1"/>
</dbReference>
<dbReference type="Pfam" id="PF00682">
    <property type="entry name" value="HMGL-like"/>
    <property type="match status" value="1"/>
</dbReference>
<dbReference type="SUPFAM" id="SSF51569">
    <property type="entry name" value="Aldolase"/>
    <property type="match status" value="1"/>
</dbReference>
<dbReference type="PROSITE" id="PS00815">
    <property type="entry name" value="AIPM_HOMOCIT_SYNTH_1"/>
    <property type="match status" value="1"/>
</dbReference>
<dbReference type="PROSITE" id="PS00816">
    <property type="entry name" value="AIPM_HOMOCIT_SYNTH_2"/>
    <property type="match status" value="1"/>
</dbReference>
<dbReference type="PROSITE" id="PS50991">
    <property type="entry name" value="PYR_CT"/>
    <property type="match status" value="1"/>
</dbReference>
<protein>
    <recommendedName>
        <fullName>2-isopropylmalate synthase</fullName>
        <shortName>IPMS</shortName>
        <ecNumber evidence="2">2.3.3.13</ecNumber>
    </recommendedName>
    <alternativeName>
        <fullName>Alpha-isopropylmalate synthase</fullName>
        <shortName>Alpha-IPM synthase</shortName>
    </alternativeName>
</protein>
<gene>
    <name type="primary">leuA</name>
    <name type="ordered locus">STK_05380</name>
</gene>